<evidence type="ECO:0000255" key="1">
    <source>
        <dbReference type="HAMAP-Rule" id="MF_01576"/>
    </source>
</evidence>
<gene>
    <name evidence="1" type="primary">folD</name>
    <name type="ordered locus">LBL_1870</name>
</gene>
<organism>
    <name type="scientific">Leptospira borgpetersenii serovar Hardjo-bovis (strain L550)</name>
    <dbReference type="NCBI Taxonomy" id="355276"/>
    <lineage>
        <taxon>Bacteria</taxon>
        <taxon>Pseudomonadati</taxon>
        <taxon>Spirochaetota</taxon>
        <taxon>Spirochaetia</taxon>
        <taxon>Leptospirales</taxon>
        <taxon>Leptospiraceae</taxon>
        <taxon>Leptospira</taxon>
    </lineage>
</organism>
<reference key="1">
    <citation type="journal article" date="2006" name="Proc. Natl. Acad. Sci. U.S.A.">
        <title>Genome reduction in Leptospira borgpetersenii reflects limited transmission potential.</title>
        <authorList>
            <person name="Bulach D.M."/>
            <person name="Zuerner R.L."/>
            <person name="Wilson P."/>
            <person name="Seemann T."/>
            <person name="McGrath A."/>
            <person name="Cullen P.A."/>
            <person name="Davis J."/>
            <person name="Johnson M."/>
            <person name="Kuczek E."/>
            <person name="Alt D.P."/>
            <person name="Peterson-Burch B."/>
            <person name="Coppel R.L."/>
            <person name="Rood J.I."/>
            <person name="Davies J.K."/>
            <person name="Adler B."/>
        </authorList>
    </citation>
    <scope>NUCLEOTIDE SEQUENCE [LARGE SCALE GENOMIC DNA]</scope>
    <source>
        <strain>L550</strain>
    </source>
</reference>
<proteinExistence type="inferred from homology"/>
<comment type="function">
    <text evidence="1">Catalyzes the oxidation of 5,10-methylenetetrahydrofolate to 5,10-methenyltetrahydrofolate and then the hydrolysis of 5,10-methenyltetrahydrofolate to 10-formyltetrahydrofolate.</text>
</comment>
<comment type="catalytic activity">
    <reaction evidence="1">
        <text>(6R)-5,10-methylene-5,6,7,8-tetrahydrofolate + NADP(+) = (6R)-5,10-methenyltetrahydrofolate + NADPH</text>
        <dbReference type="Rhea" id="RHEA:22812"/>
        <dbReference type="ChEBI" id="CHEBI:15636"/>
        <dbReference type="ChEBI" id="CHEBI:57455"/>
        <dbReference type="ChEBI" id="CHEBI:57783"/>
        <dbReference type="ChEBI" id="CHEBI:58349"/>
        <dbReference type="EC" id="1.5.1.5"/>
    </reaction>
</comment>
<comment type="catalytic activity">
    <reaction evidence="1">
        <text>(6R)-5,10-methenyltetrahydrofolate + H2O = (6R)-10-formyltetrahydrofolate + H(+)</text>
        <dbReference type="Rhea" id="RHEA:23700"/>
        <dbReference type="ChEBI" id="CHEBI:15377"/>
        <dbReference type="ChEBI" id="CHEBI:15378"/>
        <dbReference type="ChEBI" id="CHEBI:57455"/>
        <dbReference type="ChEBI" id="CHEBI:195366"/>
        <dbReference type="EC" id="3.5.4.9"/>
    </reaction>
</comment>
<comment type="pathway">
    <text evidence="1">One-carbon metabolism; tetrahydrofolate interconversion.</text>
</comment>
<comment type="subunit">
    <text evidence="1">Homodimer.</text>
</comment>
<comment type="similarity">
    <text evidence="1">Belongs to the tetrahydrofolate dehydrogenase/cyclohydrolase family.</text>
</comment>
<sequence length="284" mass="30854">MDPILLDGKKLSEKIRNEIRREIEERKTKNLRIPKLATILVGNNPASETYVSMKIKACHGVGMGSEMIRLGEQTTTEELLSVIDKLNADPNVDGILLQHPSPSQIDERAAFDRISFRKDVDGVTTLSFGKLSMGVETYLPCTPYGIVLLLKEHGINVSGKNAVVVGRSPILGKPMAMLLTEMNATVTLCHSKTQNLPEIVRLADIVVGAVGKPEFIKADWISKGAVLLDAGYNPGNVGDIEISKAKNHSSFYTPVPGGVGPMTIAVLLLQTLYSSKEHFTPPVQ</sequence>
<accession>Q050D8</accession>
<dbReference type="EC" id="1.5.1.5" evidence="1"/>
<dbReference type="EC" id="3.5.4.9" evidence="1"/>
<dbReference type="EMBL" id="CP000348">
    <property type="protein sequence ID" value="ABJ79307.1"/>
    <property type="molecule type" value="Genomic_DNA"/>
</dbReference>
<dbReference type="RefSeq" id="WP_011670405.1">
    <property type="nucleotide sequence ID" value="NC_008508.1"/>
</dbReference>
<dbReference type="SMR" id="Q050D8"/>
<dbReference type="KEGG" id="lbl:LBL_1870"/>
<dbReference type="HOGENOM" id="CLU_034045_2_1_12"/>
<dbReference type="UniPathway" id="UPA00193"/>
<dbReference type="GO" id="GO:0005829">
    <property type="term" value="C:cytosol"/>
    <property type="evidence" value="ECO:0007669"/>
    <property type="project" value="TreeGrafter"/>
</dbReference>
<dbReference type="GO" id="GO:0004477">
    <property type="term" value="F:methenyltetrahydrofolate cyclohydrolase activity"/>
    <property type="evidence" value="ECO:0007669"/>
    <property type="project" value="UniProtKB-UniRule"/>
</dbReference>
<dbReference type="GO" id="GO:0004488">
    <property type="term" value="F:methylenetetrahydrofolate dehydrogenase (NADP+) activity"/>
    <property type="evidence" value="ECO:0007669"/>
    <property type="project" value="UniProtKB-UniRule"/>
</dbReference>
<dbReference type="GO" id="GO:0000105">
    <property type="term" value="P:L-histidine biosynthetic process"/>
    <property type="evidence" value="ECO:0007669"/>
    <property type="project" value="UniProtKB-KW"/>
</dbReference>
<dbReference type="GO" id="GO:0009086">
    <property type="term" value="P:methionine biosynthetic process"/>
    <property type="evidence" value="ECO:0007669"/>
    <property type="project" value="UniProtKB-KW"/>
</dbReference>
<dbReference type="GO" id="GO:0006164">
    <property type="term" value="P:purine nucleotide biosynthetic process"/>
    <property type="evidence" value="ECO:0007669"/>
    <property type="project" value="UniProtKB-KW"/>
</dbReference>
<dbReference type="GO" id="GO:0035999">
    <property type="term" value="P:tetrahydrofolate interconversion"/>
    <property type="evidence" value="ECO:0007669"/>
    <property type="project" value="UniProtKB-UniRule"/>
</dbReference>
<dbReference type="CDD" id="cd01080">
    <property type="entry name" value="NAD_bind_m-THF_DH_Cyclohyd"/>
    <property type="match status" value="1"/>
</dbReference>
<dbReference type="FunFam" id="3.40.50.720:FF:000094">
    <property type="entry name" value="Bifunctional protein FolD"/>
    <property type="match status" value="1"/>
</dbReference>
<dbReference type="FunFam" id="3.40.50.10860:FF:000005">
    <property type="entry name" value="C-1-tetrahydrofolate synthase, cytoplasmic, putative"/>
    <property type="match status" value="1"/>
</dbReference>
<dbReference type="Gene3D" id="3.40.50.10860">
    <property type="entry name" value="Leucine Dehydrogenase, chain A, domain 1"/>
    <property type="match status" value="1"/>
</dbReference>
<dbReference type="Gene3D" id="3.40.50.720">
    <property type="entry name" value="NAD(P)-binding Rossmann-like Domain"/>
    <property type="match status" value="1"/>
</dbReference>
<dbReference type="HAMAP" id="MF_01576">
    <property type="entry name" value="THF_DHG_CYH"/>
    <property type="match status" value="1"/>
</dbReference>
<dbReference type="InterPro" id="IPR046346">
    <property type="entry name" value="Aminoacid_DH-like_N_sf"/>
</dbReference>
<dbReference type="InterPro" id="IPR036291">
    <property type="entry name" value="NAD(P)-bd_dom_sf"/>
</dbReference>
<dbReference type="InterPro" id="IPR000672">
    <property type="entry name" value="THF_DH/CycHdrlase"/>
</dbReference>
<dbReference type="InterPro" id="IPR020630">
    <property type="entry name" value="THF_DH/CycHdrlase_cat_dom"/>
</dbReference>
<dbReference type="InterPro" id="IPR020867">
    <property type="entry name" value="THF_DH/CycHdrlase_CS"/>
</dbReference>
<dbReference type="InterPro" id="IPR020631">
    <property type="entry name" value="THF_DH/CycHdrlase_NAD-bd_dom"/>
</dbReference>
<dbReference type="NCBIfam" id="NF010774">
    <property type="entry name" value="PRK14177.1"/>
    <property type="match status" value="1"/>
</dbReference>
<dbReference type="PANTHER" id="PTHR48099:SF5">
    <property type="entry name" value="C-1-TETRAHYDROFOLATE SYNTHASE, CYTOPLASMIC"/>
    <property type="match status" value="1"/>
</dbReference>
<dbReference type="PANTHER" id="PTHR48099">
    <property type="entry name" value="C-1-TETRAHYDROFOLATE SYNTHASE, CYTOPLASMIC-RELATED"/>
    <property type="match status" value="1"/>
</dbReference>
<dbReference type="Pfam" id="PF00763">
    <property type="entry name" value="THF_DHG_CYH"/>
    <property type="match status" value="1"/>
</dbReference>
<dbReference type="Pfam" id="PF02882">
    <property type="entry name" value="THF_DHG_CYH_C"/>
    <property type="match status" value="1"/>
</dbReference>
<dbReference type="PRINTS" id="PR00085">
    <property type="entry name" value="THFDHDRGNASE"/>
</dbReference>
<dbReference type="SUPFAM" id="SSF53223">
    <property type="entry name" value="Aminoacid dehydrogenase-like, N-terminal domain"/>
    <property type="match status" value="1"/>
</dbReference>
<dbReference type="SUPFAM" id="SSF51735">
    <property type="entry name" value="NAD(P)-binding Rossmann-fold domains"/>
    <property type="match status" value="1"/>
</dbReference>
<dbReference type="PROSITE" id="PS00767">
    <property type="entry name" value="THF_DHG_CYH_2"/>
    <property type="match status" value="1"/>
</dbReference>
<name>FOLD_LEPBL</name>
<protein>
    <recommendedName>
        <fullName evidence="1">Bifunctional protein FolD</fullName>
    </recommendedName>
    <domain>
        <recommendedName>
            <fullName evidence="1">Methylenetetrahydrofolate dehydrogenase</fullName>
            <ecNumber evidence="1">1.5.1.5</ecNumber>
        </recommendedName>
    </domain>
    <domain>
        <recommendedName>
            <fullName evidence="1">Methenyltetrahydrofolate cyclohydrolase</fullName>
            <ecNumber evidence="1">3.5.4.9</ecNumber>
        </recommendedName>
    </domain>
</protein>
<feature type="chain" id="PRO_0000305836" description="Bifunctional protein FolD">
    <location>
        <begin position="1"/>
        <end position="284"/>
    </location>
</feature>
<feature type="binding site" evidence="1">
    <location>
        <begin position="166"/>
        <end position="168"/>
    </location>
    <ligand>
        <name>NADP(+)</name>
        <dbReference type="ChEBI" id="CHEBI:58349"/>
    </ligand>
</feature>
<feature type="binding site" evidence="1">
    <location>
        <position position="191"/>
    </location>
    <ligand>
        <name>NADP(+)</name>
        <dbReference type="ChEBI" id="CHEBI:58349"/>
    </ligand>
</feature>
<keyword id="KW-0028">Amino-acid biosynthesis</keyword>
<keyword id="KW-0368">Histidine biosynthesis</keyword>
<keyword id="KW-0378">Hydrolase</keyword>
<keyword id="KW-0486">Methionine biosynthesis</keyword>
<keyword id="KW-0511">Multifunctional enzyme</keyword>
<keyword id="KW-0521">NADP</keyword>
<keyword id="KW-0554">One-carbon metabolism</keyword>
<keyword id="KW-0560">Oxidoreductase</keyword>
<keyword id="KW-0658">Purine biosynthesis</keyword>